<accession>P51862</accession>
<feature type="initiator methionine" description="Removed" evidence="8">
    <location>
        <position position="1"/>
    </location>
</feature>
<feature type="chain" id="PRO_0000080969" description="RHO1 GDP-GTP exchange protein 2">
    <location>
        <begin position="2"/>
        <end position="1356"/>
    </location>
</feature>
<feature type="domain" description="DH" evidence="1">
    <location>
        <begin position="659"/>
        <end position="846"/>
    </location>
</feature>
<feature type="domain" description="CNH" evidence="2">
    <location>
        <begin position="1034"/>
        <end position="1336"/>
    </location>
</feature>
<feature type="region of interest" description="Disordered" evidence="3">
    <location>
        <begin position="74"/>
        <end position="94"/>
    </location>
</feature>
<feature type="region of interest" description="Disordered" evidence="3">
    <location>
        <begin position="109"/>
        <end position="175"/>
    </location>
</feature>
<feature type="region of interest" description="Disordered" evidence="3">
    <location>
        <begin position="202"/>
        <end position="291"/>
    </location>
</feature>
<feature type="region of interest" description="Disordered" evidence="3">
    <location>
        <begin position="303"/>
        <end position="362"/>
    </location>
</feature>
<feature type="region of interest" description="Disordered" evidence="3">
    <location>
        <begin position="383"/>
        <end position="409"/>
    </location>
</feature>
<feature type="region of interest" description="Disordered" evidence="3">
    <location>
        <begin position="531"/>
        <end position="571"/>
    </location>
</feature>
<feature type="region of interest" description="Disordered" evidence="3">
    <location>
        <begin position="626"/>
        <end position="645"/>
    </location>
</feature>
<feature type="compositionally biased region" description="Polar residues" evidence="3">
    <location>
        <begin position="109"/>
        <end position="125"/>
    </location>
</feature>
<feature type="compositionally biased region" description="Polar residues" evidence="3">
    <location>
        <begin position="147"/>
        <end position="157"/>
    </location>
</feature>
<feature type="compositionally biased region" description="Polar residues" evidence="3">
    <location>
        <begin position="204"/>
        <end position="221"/>
    </location>
</feature>
<feature type="compositionally biased region" description="Basic and acidic residues" evidence="3">
    <location>
        <begin position="235"/>
        <end position="244"/>
    </location>
</feature>
<feature type="compositionally biased region" description="Low complexity" evidence="3">
    <location>
        <begin position="250"/>
        <end position="265"/>
    </location>
</feature>
<feature type="compositionally biased region" description="Polar residues" evidence="3">
    <location>
        <begin position="271"/>
        <end position="281"/>
    </location>
</feature>
<feature type="compositionally biased region" description="Low complexity" evidence="3">
    <location>
        <begin position="282"/>
        <end position="291"/>
    </location>
</feature>
<feature type="compositionally biased region" description="Polar residues" evidence="3">
    <location>
        <begin position="303"/>
        <end position="325"/>
    </location>
</feature>
<feature type="compositionally biased region" description="Basic residues" evidence="3">
    <location>
        <begin position="329"/>
        <end position="338"/>
    </location>
</feature>
<feature type="compositionally biased region" description="Low complexity" evidence="3">
    <location>
        <begin position="339"/>
        <end position="362"/>
    </location>
</feature>
<feature type="compositionally biased region" description="Low complexity" evidence="3">
    <location>
        <begin position="383"/>
        <end position="401"/>
    </location>
</feature>
<feature type="modified residue" description="N-acetylserine" evidence="8">
    <location>
        <position position="2"/>
    </location>
</feature>
<feature type="modified residue" description="Phosphoserine" evidence="5 6 7">
    <location>
        <position position="76"/>
    </location>
</feature>
<feature type="modified residue" description="Phosphoserine" evidence="4 5">
    <location>
        <position position="193"/>
    </location>
</feature>
<feature type="modified residue" description="Phosphoserine" evidence="5 7">
    <location>
        <position position="223"/>
    </location>
</feature>
<feature type="modified residue" description="Phosphoserine" evidence="7">
    <location>
        <position position="566"/>
    </location>
</feature>
<feature type="modified residue" description="Phosphoserine" evidence="7">
    <location>
        <position position="628"/>
    </location>
</feature>
<protein>
    <recommendedName>
        <fullName>RHO1 GDP-GTP exchange protein 2</fullName>
    </recommendedName>
</protein>
<sequence length="1356" mass="152596">MSETNVDSLGDRNDIYSQIFGVERRPDSFATFDSDSHGDISSQLLPNRIENIQNLNVLLSEDIANDIIIAKQRRRSGVEAAIDDSDIPNNEMKGKSSNYILSQQTNIKEVPDTQSLSSADNTPVSSPKKARDATSSHPIVHAKSMSHIYSTSNSASRQAKHYNDHPLPPMSPRNEVYQKNKSTTAFVPKRKPSLPQLALAGLKKQSSFSTGSASTTPTQARKSPLQGFGFFSRPSSKDLHEQHQHHQHIQHNNINNHNNNNTNNNGAHYQVGSSNSNYPQHSHSISSRSMSLNSSTLKNIASSFQSKTSNSRKATQKYDITSNPFSDPHHHHHHHHSSNSHSSLNNVHGSGNSSSVMGSSSNIGLGLKTRVSSTSLALKRYTSVSGTSLSSPRRSSMTPLSASRPVMSASSKKPQVYPALLSRVATKFKSSIQLGEHKKDGLVYRDAFTGQQAVDVICAIIRTSDRNLALLFGRSLDAQKLFHDVVYEHRLRDSPHEVYEFTDNSRFTGTGSTNAHDPLMLLPNSSSFNSGNHSYPNSGMVPSSSTSSLNSDQATLTGSRLHMSSSLSQQKNPAAIHNVNGVFTLLAECYSPTCTRDALCYSISCPRRLEQQARLNLKPNGGLKRNISMALDDDDEEKPSWTSSVSKEDWENLPKKEIKRQEAIYEVYITEKNFVKSLEITRDTFMKTLAETNIISADIRKNFIKHVFAHINDIYSVNRRFLKALTDRQRSSPVVRGIGDIVLRFIPFFEPFVSYVASRPYAKYLIETQRSVNPYFARFDDDMMSSSLRHGIDSFLSQGVSRPGRYMLLVKEIMKSTDPEKDKSDYEDLSKAMDALRDFMKRIDQASGAAQDRHDVKLLKQKILFKNEYVNLGLNDERRKIKHEGILSRKELSKSDGTVVGDIQFYLLDNMLLFLKAKAVNKWHQHKVFQRPIPLPLLFACPGEDMPALRKYIGDHPDCSGTVIQPEYNTSNPKNAITFLYYGAKQRYQVTLYAAQYAGLQTLLEKIKQGQAAIISKTEMFNVTKMSDRFFDYTNKINSVTSCDGGRKLLIATNSGLYMSNIKRQQNKDHRHKSSAFFSTPIQLVQRNNITQIAVLEEFKSIILLIDKKLYSCPLSLIEAEGNGTSFFKKHHKELINHVSFFAEGDCNGKRLIVTAHSSSHSIKYFEHEHPLLAEKNGSGSGNKKSLKKKITEVIFDSEPVSISFLKANLCIGCKKGFQIVSISQNAHESLLDPADTSLEFALRDTLKPMAIYRVGNMFLLCYTEFAFFVNNQGWRKKESHIIHWEGEPQKFAIWYPYILAFDSNFIEIRKIETGELIRCVLADKIRLLQTSTQEILYCYEDYRGYDTVASLDFWG</sequence>
<keyword id="KW-0007">Acetylation</keyword>
<keyword id="KW-0344">Guanine-nucleotide releasing factor</keyword>
<keyword id="KW-0597">Phosphoprotein</keyword>
<keyword id="KW-1185">Reference proteome</keyword>
<dbReference type="EMBL" id="U19103">
    <property type="protein sequence ID" value="AAB67564.1"/>
    <property type="molecule type" value="Genomic_DNA"/>
</dbReference>
<dbReference type="EMBL" id="BK006945">
    <property type="protein sequence ID" value="DAA09674.1"/>
    <property type="molecule type" value="Genomic_DNA"/>
</dbReference>
<dbReference type="PIR" id="S51389">
    <property type="entry name" value="S51389"/>
</dbReference>
<dbReference type="RefSeq" id="NP_013475.1">
    <property type="nucleotide sequence ID" value="NM_001182260.1"/>
</dbReference>
<dbReference type="SMR" id="P51862"/>
<dbReference type="BioGRID" id="31631">
    <property type="interactions" value="814"/>
</dbReference>
<dbReference type="DIP" id="DIP-4663N"/>
<dbReference type="FunCoup" id="P51862">
    <property type="interactions" value="383"/>
</dbReference>
<dbReference type="IntAct" id="P51862">
    <property type="interactions" value="20"/>
</dbReference>
<dbReference type="MINT" id="P51862"/>
<dbReference type="STRING" id="4932.YLR371W"/>
<dbReference type="iPTMnet" id="P51862"/>
<dbReference type="PaxDb" id="4932-YLR371W"/>
<dbReference type="PeptideAtlas" id="P51862"/>
<dbReference type="EnsemblFungi" id="YLR371W_mRNA">
    <property type="protein sequence ID" value="YLR371W"/>
    <property type="gene ID" value="YLR371W"/>
</dbReference>
<dbReference type="GeneID" id="851086"/>
<dbReference type="KEGG" id="sce:YLR371W"/>
<dbReference type="AGR" id="SGD:S000004363"/>
<dbReference type="SGD" id="S000004363">
    <property type="gene designation" value="ROM2"/>
</dbReference>
<dbReference type="VEuPathDB" id="FungiDB:YLR371W"/>
<dbReference type="eggNOG" id="KOG4305">
    <property type="taxonomic scope" value="Eukaryota"/>
</dbReference>
<dbReference type="GeneTree" id="ENSGT00940000176600"/>
<dbReference type="HOGENOM" id="CLU_001251_6_1_1"/>
<dbReference type="InParanoid" id="P51862"/>
<dbReference type="OMA" id="FAHVNDI"/>
<dbReference type="OrthoDB" id="2272012at2759"/>
<dbReference type="BioCyc" id="YEAST:G3O-32440-MONOMER"/>
<dbReference type="BioGRID-ORCS" id="851086">
    <property type="hits" value="5 hits in 10 CRISPR screens"/>
</dbReference>
<dbReference type="PRO" id="PR:P51862"/>
<dbReference type="Proteomes" id="UP000002311">
    <property type="component" value="Chromosome XII"/>
</dbReference>
<dbReference type="RNAct" id="P51862">
    <property type="molecule type" value="protein"/>
</dbReference>
<dbReference type="GO" id="GO:0032153">
    <property type="term" value="C:cell division site"/>
    <property type="evidence" value="ECO:0000318"/>
    <property type="project" value="GO_Central"/>
</dbReference>
<dbReference type="GO" id="GO:0071944">
    <property type="term" value="C:cell periphery"/>
    <property type="evidence" value="ECO:0007005"/>
    <property type="project" value="SGD"/>
</dbReference>
<dbReference type="GO" id="GO:0005934">
    <property type="term" value="C:cellular bud tip"/>
    <property type="evidence" value="ECO:0000314"/>
    <property type="project" value="SGD"/>
</dbReference>
<dbReference type="GO" id="GO:0005737">
    <property type="term" value="C:cytoplasm"/>
    <property type="evidence" value="ECO:0000318"/>
    <property type="project" value="GO_Central"/>
</dbReference>
<dbReference type="GO" id="GO:0000131">
    <property type="term" value="C:incipient cellular bud site"/>
    <property type="evidence" value="ECO:0000314"/>
    <property type="project" value="SGD"/>
</dbReference>
<dbReference type="GO" id="GO:0043332">
    <property type="term" value="C:mating projection tip"/>
    <property type="evidence" value="ECO:0000314"/>
    <property type="project" value="SGD"/>
</dbReference>
<dbReference type="GO" id="GO:0005634">
    <property type="term" value="C:nucleus"/>
    <property type="evidence" value="ECO:0007005"/>
    <property type="project" value="SGD"/>
</dbReference>
<dbReference type="GO" id="GO:0005085">
    <property type="term" value="F:guanyl-nucleotide exchange factor activity"/>
    <property type="evidence" value="ECO:0000314"/>
    <property type="project" value="SGD"/>
</dbReference>
<dbReference type="GO" id="GO:0005546">
    <property type="term" value="F:phosphatidylinositol-4,5-bisphosphate binding"/>
    <property type="evidence" value="ECO:0000314"/>
    <property type="project" value="SGD"/>
</dbReference>
<dbReference type="GO" id="GO:0030010">
    <property type="term" value="P:establishment of cell polarity"/>
    <property type="evidence" value="ECO:0000315"/>
    <property type="project" value="SGD"/>
</dbReference>
<dbReference type="GO" id="GO:0045807">
    <property type="term" value="P:positive regulation of endocytosis"/>
    <property type="evidence" value="ECO:0000315"/>
    <property type="project" value="SGD"/>
</dbReference>
<dbReference type="GO" id="GO:1903501">
    <property type="term" value="P:positive regulation of mitotic actomyosin contractile ring assembly"/>
    <property type="evidence" value="ECO:0000316"/>
    <property type="project" value="SGD"/>
</dbReference>
<dbReference type="GO" id="GO:1903338">
    <property type="term" value="P:regulation of cell wall organization or biogenesis"/>
    <property type="evidence" value="ECO:0000318"/>
    <property type="project" value="GO_Central"/>
</dbReference>
<dbReference type="GO" id="GO:0060237">
    <property type="term" value="P:regulation of fungal-type cell wall organization"/>
    <property type="evidence" value="ECO:0000316"/>
    <property type="project" value="SGD"/>
</dbReference>
<dbReference type="GO" id="GO:0007264">
    <property type="term" value="P:small GTPase-mediated signal transduction"/>
    <property type="evidence" value="ECO:0000353"/>
    <property type="project" value="SGD"/>
</dbReference>
<dbReference type="CDD" id="cd04435">
    <property type="entry name" value="DEP_fRom2"/>
    <property type="match status" value="1"/>
</dbReference>
<dbReference type="CDD" id="cd00160">
    <property type="entry name" value="RhoGEF"/>
    <property type="match status" value="1"/>
</dbReference>
<dbReference type="FunFam" id="1.20.900.10:FF:000035">
    <property type="entry name" value="Rho guanyl nucleotide exchange factor"/>
    <property type="match status" value="1"/>
</dbReference>
<dbReference type="FunFam" id="2.30.29.30:FF:000405">
    <property type="entry name" value="RHO1 GDP-GTP exchange protein 2"/>
    <property type="match status" value="1"/>
</dbReference>
<dbReference type="Gene3D" id="1.20.900.10">
    <property type="entry name" value="Dbl homology (DH) domain"/>
    <property type="match status" value="1"/>
</dbReference>
<dbReference type="Gene3D" id="2.30.29.30">
    <property type="entry name" value="Pleckstrin-homology domain (PH domain)/Phosphotyrosine-binding domain (PTB)"/>
    <property type="match status" value="1"/>
</dbReference>
<dbReference type="Gene3D" id="1.10.10.10">
    <property type="entry name" value="Winged helix-like DNA-binding domain superfamily/Winged helix DNA-binding domain"/>
    <property type="match status" value="1"/>
</dbReference>
<dbReference type="InterPro" id="IPR001180">
    <property type="entry name" value="CNH_dom"/>
</dbReference>
<dbReference type="InterPro" id="IPR035899">
    <property type="entry name" value="DBL_dom_sf"/>
</dbReference>
<dbReference type="InterPro" id="IPR000591">
    <property type="entry name" value="DEP_dom"/>
</dbReference>
<dbReference type="InterPro" id="IPR000219">
    <property type="entry name" value="DH_dom"/>
</dbReference>
<dbReference type="InterPro" id="IPR011993">
    <property type="entry name" value="PH-like_dom_sf"/>
</dbReference>
<dbReference type="InterPro" id="IPR041675">
    <property type="entry name" value="PH_5"/>
</dbReference>
<dbReference type="InterPro" id="IPR052233">
    <property type="entry name" value="Rho-type_GEFs"/>
</dbReference>
<dbReference type="InterPro" id="IPR036388">
    <property type="entry name" value="WH-like_DNA-bd_sf"/>
</dbReference>
<dbReference type="InterPro" id="IPR036390">
    <property type="entry name" value="WH_DNA-bd_sf"/>
</dbReference>
<dbReference type="PANTHER" id="PTHR46572">
    <property type="entry name" value="RHO1 GDP-GTP EXCHANGE PROTEIN 1-RELATED"/>
    <property type="match status" value="1"/>
</dbReference>
<dbReference type="PANTHER" id="PTHR46572:SF2">
    <property type="entry name" value="RHO1 GDP-GTP EXCHANGE PROTEIN 1-RELATED"/>
    <property type="match status" value="1"/>
</dbReference>
<dbReference type="Pfam" id="PF00780">
    <property type="entry name" value="CNH"/>
    <property type="match status" value="1"/>
</dbReference>
<dbReference type="Pfam" id="PF00610">
    <property type="entry name" value="DEP"/>
    <property type="match status" value="1"/>
</dbReference>
<dbReference type="Pfam" id="PF15405">
    <property type="entry name" value="PH_5"/>
    <property type="match status" value="1"/>
</dbReference>
<dbReference type="Pfam" id="PF00621">
    <property type="entry name" value="RhoGEF"/>
    <property type="match status" value="1"/>
</dbReference>
<dbReference type="SMART" id="SM00036">
    <property type="entry name" value="CNH"/>
    <property type="match status" value="1"/>
</dbReference>
<dbReference type="SMART" id="SM00049">
    <property type="entry name" value="DEP"/>
    <property type="match status" value="1"/>
</dbReference>
<dbReference type="SMART" id="SM00325">
    <property type="entry name" value="RhoGEF"/>
    <property type="match status" value="1"/>
</dbReference>
<dbReference type="SUPFAM" id="SSF48065">
    <property type="entry name" value="DBL homology domain (DH-domain)"/>
    <property type="match status" value="1"/>
</dbReference>
<dbReference type="SUPFAM" id="SSF46785">
    <property type="entry name" value="Winged helix' DNA-binding domain"/>
    <property type="match status" value="1"/>
</dbReference>
<dbReference type="PROSITE" id="PS50219">
    <property type="entry name" value="CNH"/>
    <property type="match status" value="1"/>
</dbReference>
<dbReference type="PROSITE" id="PS50010">
    <property type="entry name" value="DH_2"/>
    <property type="match status" value="1"/>
</dbReference>
<organism>
    <name type="scientific">Saccharomyces cerevisiae (strain ATCC 204508 / S288c)</name>
    <name type="common">Baker's yeast</name>
    <dbReference type="NCBI Taxonomy" id="559292"/>
    <lineage>
        <taxon>Eukaryota</taxon>
        <taxon>Fungi</taxon>
        <taxon>Dikarya</taxon>
        <taxon>Ascomycota</taxon>
        <taxon>Saccharomycotina</taxon>
        <taxon>Saccharomycetes</taxon>
        <taxon>Saccharomycetales</taxon>
        <taxon>Saccharomycetaceae</taxon>
        <taxon>Saccharomyces</taxon>
    </lineage>
</organism>
<gene>
    <name type="primary">ROM2</name>
    <name type="ordered locus">YLR371W</name>
    <name type="ORF">L8039.3</name>
</gene>
<reference key="1">
    <citation type="journal article" date="1997" name="Nature">
        <title>The nucleotide sequence of Saccharomyces cerevisiae chromosome XII.</title>
        <authorList>
            <person name="Johnston M."/>
            <person name="Hillier L.W."/>
            <person name="Riles L."/>
            <person name="Albermann K."/>
            <person name="Andre B."/>
            <person name="Ansorge W."/>
            <person name="Benes V."/>
            <person name="Brueckner M."/>
            <person name="Delius H."/>
            <person name="Dubois E."/>
            <person name="Duesterhoeft A."/>
            <person name="Entian K.-D."/>
            <person name="Floeth M."/>
            <person name="Goffeau A."/>
            <person name="Hebling U."/>
            <person name="Heumann K."/>
            <person name="Heuss-Neitzel D."/>
            <person name="Hilbert H."/>
            <person name="Hilger F."/>
            <person name="Kleine K."/>
            <person name="Koetter P."/>
            <person name="Louis E.J."/>
            <person name="Messenguy F."/>
            <person name="Mewes H.-W."/>
            <person name="Miosga T."/>
            <person name="Moestl D."/>
            <person name="Mueller-Auer S."/>
            <person name="Nentwich U."/>
            <person name="Obermaier B."/>
            <person name="Piravandi E."/>
            <person name="Pohl T.M."/>
            <person name="Portetelle D."/>
            <person name="Purnelle B."/>
            <person name="Rechmann S."/>
            <person name="Rieger M."/>
            <person name="Rinke M."/>
            <person name="Rose M."/>
            <person name="Scharfe M."/>
            <person name="Scherens B."/>
            <person name="Scholler P."/>
            <person name="Schwager C."/>
            <person name="Schwarz S."/>
            <person name="Underwood A.P."/>
            <person name="Urrestarazu L.A."/>
            <person name="Vandenbol M."/>
            <person name="Verhasselt P."/>
            <person name="Vierendeels F."/>
            <person name="Voet M."/>
            <person name="Volckaert G."/>
            <person name="Voss H."/>
            <person name="Wambutt R."/>
            <person name="Wedler E."/>
            <person name="Wedler H."/>
            <person name="Zimmermann F.K."/>
            <person name="Zollner A."/>
            <person name="Hani J."/>
            <person name="Hoheisel J.D."/>
        </authorList>
    </citation>
    <scope>NUCLEOTIDE SEQUENCE [LARGE SCALE GENOMIC DNA]</scope>
    <source>
        <strain>ATCC 204508 / S288c</strain>
    </source>
</reference>
<reference key="2">
    <citation type="journal article" date="2014" name="G3 (Bethesda)">
        <title>The reference genome sequence of Saccharomyces cerevisiae: Then and now.</title>
        <authorList>
            <person name="Engel S.R."/>
            <person name="Dietrich F.S."/>
            <person name="Fisk D.G."/>
            <person name="Binkley G."/>
            <person name="Balakrishnan R."/>
            <person name="Costanzo M.C."/>
            <person name="Dwight S.S."/>
            <person name="Hitz B.C."/>
            <person name="Karra K."/>
            <person name="Nash R.S."/>
            <person name="Weng S."/>
            <person name="Wong E.D."/>
            <person name="Lloyd P."/>
            <person name="Skrzypek M.S."/>
            <person name="Miyasato S.R."/>
            <person name="Simison M."/>
            <person name="Cherry J.M."/>
        </authorList>
    </citation>
    <scope>GENOME REANNOTATION</scope>
    <source>
        <strain>ATCC 204508 / S288c</strain>
    </source>
</reference>
<reference key="3">
    <citation type="journal article" date="1996" name="EMBO J.">
        <title>Rom1p and Rom2p are GDP/GTP exchange proteins (GEPs) for the Rho1p small GTP binding protein in Saccharomyces cerevisiae.</title>
        <authorList>
            <person name="Ozaki K."/>
            <person name="Tanaka K."/>
            <person name="Imamura H."/>
            <person name="Hihara T."/>
            <person name="Kameyama T."/>
            <person name="Nonaka H."/>
            <person name="Hirano H."/>
            <person name="Matsuura Y."/>
            <person name="Takai Y."/>
        </authorList>
    </citation>
    <scope>CHARACTERIZATION</scope>
</reference>
<reference key="4">
    <citation type="journal article" date="2007" name="J. Proteome Res.">
        <title>Large-scale phosphorylation analysis of alpha-factor-arrested Saccharomyces cerevisiae.</title>
        <authorList>
            <person name="Li X."/>
            <person name="Gerber S.A."/>
            <person name="Rudner A.D."/>
            <person name="Beausoleil S.A."/>
            <person name="Haas W."/>
            <person name="Villen J."/>
            <person name="Elias J.E."/>
            <person name="Gygi S.P."/>
        </authorList>
    </citation>
    <scope>PHOSPHORYLATION [LARGE SCALE ANALYSIS] AT SER-76; SER-193 AND SER-223</scope>
    <scope>IDENTIFICATION BY MASS SPECTROMETRY [LARGE SCALE ANALYSIS]</scope>
    <source>
        <strain>ADR376</strain>
    </source>
</reference>
<reference key="5">
    <citation type="journal article" date="2007" name="Proc. Natl. Acad. Sci. U.S.A.">
        <title>Analysis of phosphorylation sites on proteins from Saccharomyces cerevisiae by electron transfer dissociation (ETD) mass spectrometry.</title>
        <authorList>
            <person name="Chi A."/>
            <person name="Huttenhower C."/>
            <person name="Geer L.Y."/>
            <person name="Coon J.J."/>
            <person name="Syka J.E.P."/>
            <person name="Bai D.L."/>
            <person name="Shabanowitz J."/>
            <person name="Burke D.J."/>
            <person name="Troyanskaya O.G."/>
            <person name="Hunt D.F."/>
        </authorList>
    </citation>
    <scope>PHOSPHORYLATION [LARGE SCALE ANALYSIS] AT SER-193</scope>
    <scope>IDENTIFICATION BY MASS SPECTROMETRY [LARGE SCALE ANALYSIS]</scope>
</reference>
<reference key="6">
    <citation type="journal article" date="2008" name="Mol. Cell. Proteomics">
        <title>A multidimensional chromatography technology for in-depth phosphoproteome analysis.</title>
        <authorList>
            <person name="Albuquerque C.P."/>
            <person name="Smolka M.B."/>
            <person name="Payne S.H."/>
            <person name="Bafna V."/>
            <person name="Eng J."/>
            <person name="Zhou H."/>
        </authorList>
    </citation>
    <scope>PHOSPHORYLATION [LARGE SCALE ANALYSIS] AT SER-76</scope>
    <scope>IDENTIFICATION BY MASS SPECTROMETRY [LARGE SCALE ANALYSIS]</scope>
</reference>
<reference key="7">
    <citation type="journal article" date="2009" name="Science">
        <title>Global analysis of Cdk1 substrate phosphorylation sites provides insights into evolution.</title>
        <authorList>
            <person name="Holt L.J."/>
            <person name="Tuch B.B."/>
            <person name="Villen J."/>
            <person name="Johnson A.D."/>
            <person name="Gygi S.P."/>
            <person name="Morgan D.O."/>
        </authorList>
    </citation>
    <scope>PHOSPHORYLATION [LARGE SCALE ANALYSIS] AT SER-76; SER-223; SER-566 AND SER-628</scope>
    <scope>IDENTIFICATION BY MASS SPECTROMETRY [LARGE SCALE ANALYSIS]</scope>
</reference>
<reference key="8">
    <citation type="journal article" date="2012" name="Proc. Natl. Acad. Sci. U.S.A.">
        <title>N-terminal acetylome analyses and functional insights of the N-terminal acetyltransferase NatB.</title>
        <authorList>
            <person name="Van Damme P."/>
            <person name="Lasa M."/>
            <person name="Polevoda B."/>
            <person name="Gazquez C."/>
            <person name="Elosegui-Artola A."/>
            <person name="Kim D.S."/>
            <person name="De Juan-Pardo E."/>
            <person name="Demeyer K."/>
            <person name="Hole K."/>
            <person name="Larrea E."/>
            <person name="Timmerman E."/>
            <person name="Prieto J."/>
            <person name="Arnesen T."/>
            <person name="Sherman F."/>
            <person name="Gevaert K."/>
            <person name="Aldabe R."/>
        </authorList>
    </citation>
    <scope>ACETYLATION [LARGE SCALE ANALYSIS] AT SER-2</scope>
    <scope>CLEAVAGE OF INITIATOR METHIONINE [LARGE SCALE ANALYSIS]</scope>
    <scope>IDENTIFICATION BY MASS SPECTROMETRY [LARGE SCALE ANALYSIS]</scope>
</reference>
<evidence type="ECO:0000255" key="1">
    <source>
        <dbReference type="PROSITE-ProRule" id="PRU00062"/>
    </source>
</evidence>
<evidence type="ECO:0000255" key="2">
    <source>
        <dbReference type="PROSITE-ProRule" id="PRU00795"/>
    </source>
</evidence>
<evidence type="ECO:0000256" key="3">
    <source>
        <dbReference type="SAM" id="MobiDB-lite"/>
    </source>
</evidence>
<evidence type="ECO:0007744" key="4">
    <source>
    </source>
</evidence>
<evidence type="ECO:0007744" key="5">
    <source>
    </source>
</evidence>
<evidence type="ECO:0007744" key="6">
    <source>
    </source>
</evidence>
<evidence type="ECO:0007744" key="7">
    <source>
    </source>
</evidence>
<evidence type="ECO:0007744" key="8">
    <source>
    </source>
</evidence>
<comment type="function">
    <text>Stimulates the exchange of RHO1 GDP-bound form into GTP-bound form.</text>
</comment>
<comment type="interaction">
    <interactant intactId="EBI-15702">
        <id>P51862</id>
    </interactant>
    <interactant intactId="EBI-38674">
        <id>Q07622</id>
        <label>ACK1</label>
    </interactant>
    <organismsDiffer>false</organismsDiffer>
    <experiments>3</experiments>
</comment>
<name>ROM2_YEAST</name>
<proteinExistence type="evidence at protein level"/>